<protein>
    <recommendedName>
        <fullName>WD repeat-containing protein 75</fullName>
    </recommendedName>
</protein>
<proteinExistence type="evidence at transcript level"/>
<name>WDR75_XENLA</name>
<organism>
    <name type="scientific">Xenopus laevis</name>
    <name type="common">African clawed frog</name>
    <dbReference type="NCBI Taxonomy" id="8355"/>
    <lineage>
        <taxon>Eukaryota</taxon>
        <taxon>Metazoa</taxon>
        <taxon>Chordata</taxon>
        <taxon>Craniata</taxon>
        <taxon>Vertebrata</taxon>
        <taxon>Euteleostomi</taxon>
        <taxon>Amphibia</taxon>
        <taxon>Batrachia</taxon>
        <taxon>Anura</taxon>
        <taxon>Pipoidea</taxon>
        <taxon>Pipidae</taxon>
        <taxon>Xenopodinae</taxon>
        <taxon>Xenopus</taxon>
        <taxon>Xenopus</taxon>
    </lineage>
</organism>
<accession>Q6DFC6</accession>
<sequence>MVSQCQIRVVRSGGSKLDYRRSVFSADGKYLICVSGDFIKVYSTSTEECIHALQGHRKLVTGIELNPKNHLQLYSCSLDGTIKLWDFTDGILIKTFLIGCKFLSLYTSATDDLVFAVTLKNNDSASSQLVSVKLPKSASQECEAKEISVIIEDVSHLPKCTAIGRQCLYVASVKGVHLSIYYFKTKKSFRFSLKATSKKGANNIFTVVACHPSEDCIATGHMDGRIRLWRNFNHKKEYTYTSLHWHHDSVMDLAFSAQGTKLLSGGVESVLVQWPYGSEEKKEFLPRLGAAIEHISVSPHGTLYCTSHTDNKISIIDTSLKVSGIIQGLLKGTVVKTGLIVDPRSNALVLNGKPGHLQFYSLLNDRHLYNLDIVQQEFIHQAGLQYMDLVKASFSSTGRWLATVEELQGGEDSMDLEMQMKLWEYQDKSQSFVLNTTINRPHEDHITSLCFRDEGNSEKEAPTLVTTGKDGLFKVWMLNNNYDIYKQSSSWLCDFVGGYHKNQATNCCFSEDGSLLAVSFDEIITVWESSTWDLKQTFCQPPGKIRNLCFGRMSCSKYLVASTNNGFICCWNLLTCALEWRAQLDATVLQPDPLSENIAVVSCSKRWSNLFLFQPSEPRPFYTQKNICQEKVQWAVFVPKEIPEFVKSESHQWLNKSQLYFLTEKQDLLTFSSKSTEERLTPLSKQLAVEESLPVTPFHLLLGKKRQEEQEKLDAQSVRAAPSFHRGYQNSAIREVLHTPAHVLPPASVLCTVFVNSLLISKKSQSTEESKEDEEMKSEHSEADSSDETEEMESQKRFPSAFSLDVAAMLPKFQEKELRRIRRTDYSWISSL</sequence>
<keyword id="KW-0539">Nucleus</keyword>
<keyword id="KW-1185">Reference proteome</keyword>
<keyword id="KW-0677">Repeat</keyword>
<keyword id="KW-0690">Ribosome biogenesis</keyword>
<keyword id="KW-0698">rRNA processing</keyword>
<keyword id="KW-0804">Transcription</keyword>
<keyword id="KW-0805">Transcription regulation</keyword>
<keyword id="KW-0853">WD repeat</keyword>
<dbReference type="EMBL" id="BC076813">
    <property type="protein sequence ID" value="AAH76813.1"/>
    <property type="molecule type" value="mRNA"/>
</dbReference>
<dbReference type="RefSeq" id="NP_001086564.1">
    <property type="nucleotide sequence ID" value="NM_001093095.1"/>
</dbReference>
<dbReference type="SMR" id="Q6DFC6"/>
<dbReference type="DNASU" id="446399"/>
<dbReference type="GeneID" id="446399"/>
<dbReference type="KEGG" id="xla:446399"/>
<dbReference type="AGR" id="Xenbase:XB-GENE-5864484"/>
<dbReference type="CTD" id="446399"/>
<dbReference type="Xenbase" id="XB-GENE-5864484">
    <property type="gene designation" value="wdr75.L"/>
</dbReference>
<dbReference type="OMA" id="WILNTRI"/>
<dbReference type="OrthoDB" id="4096at2759"/>
<dbReference type="Proteomes" id="UP000186698">
    <property type="component" value="Chromosome 9_10L"/>
</dbReference>
<dbReference type="Bgee" id="446399">
    <property type="expression patterns" value="Expressed in neurula embryo and 19 other cell types or tissues"/>
</dbReference>
<dbReference type="GO" id="GO:0005730">
    <property type="term" value="C:nucleolus"/>
    <property type="evidence" value="ECO:0000318"/>
    <property type="project" value="GO_Central"/>
</dbReference>
<dbReference type="GO" id="GO:0032040">
    <property type="term" value="C:small-subunit processome"/>
    <property type="evidence" value="ECO:0000250"/>
    <property type="project" value="UniProtKB"/>
</dbReference>
<dbReference type="GO" id="GO:0003723">
    <property type="term" value="F:RNA binding"/>
    <property type="evidence" value="ECO:0000318"/>
    <property type="project" value="GO_Central"/>
</dbReference>
<dbReference type="GO" id="GO:2000234">
    <property type="term" value="P:positive regulation of rRNA processing"/>
    <property type="evidence" value="ECO:0000318"/>
    <property type="project" value="GO_Central"/>
</dbReference>
<dbReference type="GO" id="GO:0045943">
    <property type="term" value="P:positive regulation of transcription by RNA polymerase I"/>
    <property type="evidence" value="ECO:0000318"/>
    <property type="project" value="GO_Central"/>
</dbReference>
<dbReference type="GO" id="GO:0042274">
    <property type="term" value="P:ribosomal small subunit biogenesis"/>
    <property type="evidence" value="ECO:0000250"/>
    <property type="project" value="UniProtKB"/>
</dbReference>
<dbReference type="GO" id="GO:0006364">
    <property type="term" value="P:rRNA processing"/>
    <property type="evidence" value="ECO:0007669"/>
    <property type="project" value="UniProtKB-KW"/>
</dbReference>
<dbReference type="Gene3D" id="2.130.10.10">
    <property type="entry name" value="YVTN repeat-like/Quinoprotein amine dehydrogenase"/>
    <property type="match status" value="3"/>
</dbReference>
<dbReference type="InterPro" id="IPR015943">
    <property type="entry name" value="WD40/YVTN_repeat-like_dom_sf"/>
</dbReference>
<dbReference type="InterPro" id="IPR019775">
    <property type="entry name" value="WD40_repeat_CS"/>
</dbReference>
<dbReference type="InterPro" id="IPR036322">
    <property type="entry name" value="WD40_repeat_dom_sf"/>
</dbReference>
<dbReference type="InterPro" id="IPR001680">
    <property type="entry name" value="WD40_rpt"/>
</dbReference>
<dbReference type="InterPro" id="IPR053826">
    <property type="entry name" value="WDR75"/>
</dbReference>
<dbReference type="PANTHER" id="PTHR44215">
    <property type="entry name" value="WD REPEAT-CONTAINING PROTEIN 75"/>
    <property type="match status" value="1"/>
</dbReference>
<dbReference type="PANTHER" id="PTHR44215:SF1">
    <property type="entry name" value="WD REPEAT-CONTAINING PROTEIN 75"/>
    <property type="match status" value="1"/>
</dbReference>
<dbReference type="Pfam" id="PF23869">
    <property type="entry name" value="Beta-prop_WDR75_1st"/>
    <property type="match status" value="1"/>
</dbReference>
<dbReference type="Pfam" id="PF23769">
    <property type="entry name" value="Beta-prop_WDR75_2nd"/>
    <property type="match status" value="1"/>
</dbReference>
<dbReference type="SMART" id="SM00320">
    <property type="entry name" value="WD40"/>
    <property type="match status" value="8"/>
</dbReference>
<dbReference type="SUPFAM" id="SSF50978">
    <property type="entry name" value="WD40 repeat-like"/>
    <property type="match status" value="2"/>
</dbReference>
<dbReference type="PROSITE" id="PS00678">
    <property type="entry name" value="WD_REPEATS_1"/>
    <property type="match status" value="2"/>
</dbReference>
<dbReference type="PROSITE" id="PS50082">
    <property type="entry name" value="WD_REPEATS_2"/>
    <property type="match status" value="2"/>
</dbReference>
<dbReference type="PROSITE" id="PS50294">
    <property type="entry name" value="WD_REPEATS_REGION"/>
    <property type="match status" value="3"/>
</dbReference>
<reference key="1">
    <citation type="submission" date="2004-07" db="EMBL/GenBank/DDBJ databases">
        <authorList>
            <consortium name="NIH - Xenopus Gene Collection (XGC) project"/>
        </authorList>
    </citation>
    <scope>NUCLEOTIDE SEQUENCE [LARGE SCALE MRNA]</scope>
    <source>
        <tissue>Oocyte</tissue>
    </source>
</reference>
<evidence type="ECO:0000250" key="1">
    <source>
        <dbReference type="UniProtKB" id="Q8IWA0"/>
    </source>
</evidence>
<evidence type="ECO:0000256" key="2">
    <source>
        <dbReference type="SAM" id="MobiDB-lite"/>
    </source>
</evidence>
<gene>
    <name type="primary">wdr75</name>
</gene>
<feature type="chain" id="PRO_0000051432" description="WD repeat-containing protein 75">
    <location>
        <begin position="1"/>
        <end position="832"/>
    </location>
</feature>
<feature type="repeat" description="WD 1">
    <location>
        <begin position="4"/>
        <end position="43"/>
    </location>
</feature>
<feature type="repeat" description="WD 2">
    <location>
        <begin position="47"/>
        <end position="86"/>
    </location>
</feature>
<feature type="repeat" description="WD 3">
    <location>
        <begin position="90"/>
        <end position="131"/>
    </location>
</feature>
<feature type="repeat" description="WD 4">
    <location>
        <begin position="145"/>
        <end position="184"/>
    </location>
</feature>
<feature type="repeat" description="WD 5">
    <location>
        <begin position="193"/>
        <end position="230"/>
    </location>
</feature>
<feature type="repeat" description="WD 6">
    <location>
        <begin position="236"/>
        <end position="275"/>
    </location>
</feature>
<feature type="repeat" description="WD 7">
    <location>
        <begin position="278"/>
        <end position="317"/>
    </location>
</feature>
<feature type="repeat" description="WD 8">
    <location>
        <begin position="323"/>
        <end position="361"/>
    </location>
</feature>
<feature type="repeat" description="WD 9">
    <location>
        <begin position="375"/>
        <end position="424"/>
    </location>
</feature>
<feature type="repeat" description="WD 10">
    <location>
        <begin position="431"/>
        <end position="477"/>
    </location>
</feature>
<feature type="repeat" description="WD 11">
    <location>
        <begin position="490"/>
        <end position="528"/>
    </location>
</feature>
<feature type="repeat" description="WD 12">
    <location>
        <begin position="532"/>
        <end position="572"/>
    </location>
</feature>
<feature type="repeat" description="WD 13">
    <location>
        <begin position="577"/>
        <end position="614"/>
    </location>
</feature>
<feature type="region of interest" description="Disordered" evidence="2">
    <location>
        <begin position="764"/>
        <end position="798"/>
    </location>
</feature>
<comment type="function">
    <text evidence="1">Ribosome biogenesis factor. Part of the small subunit (SSU) processome, first precursor of the small eukaryotic ribosomal subunit. During the assembly of the SSU processome in the nucleolus, many ribosome biogenesis factors, an RNA chaperone and ribosomal proteins associate with the nascent pre-rRNA and work in concert to generate RNA folding, modifications, rearrangements and cleavage as well as targeted degradation of pre-ribosomal RNA by the RNA exosome. Involved in nucleolar processing of pre-18S ribosomal RNA. Required for optimal pre-ribosomal RNA transcription by RNA polymerase I.</text>
</comment>
<comment type="subunit">
    <text evidence="1">Component of the proposed t-UTP subcomplex of the ribosomal small subunit (SSU) processome. SSU processome is composed of more than 70 proteins and the RNA chaperone small nucleolar RNA (snoRNA) U3.</text>
</comment>
<comment type="subcellular location">
    <subcellularLocation>
        <location evidence="1">Nucleus</location>
        <location evidence="1">Nucleolus</location>
    </subcellularLocation>
</comment>